<feature type="chain" id="PRO_1000081731" description="ATP synthase epsilon chain">
    <location>
        <begin position="1"/>
        <end position="139"/>
    </location>
</feature>
<protein>
    <recommendedName>
        <fullName evidence="1">ATP synthase epsilon chain</fullName>
    </recommendedName>
    <alternativeName>
        <fullName evidence="1">ATP synthase F1 sector epsilon subunit</fullName>
    </alternativeName>
    <alternativeName>
        <fullName evidence="1">F-ATPase epsilon subunit</fullName>
    </alternativeName>
</protein>
<reference key="1">
    <citation type="submission" date="2008-02" db="EMBL/GenBank/DDBJ databases">
        <title>Complete sequence of Escherichia coli C str. ATCC 8739.</title>
        <authorList>
            <person name="Copeland A."/>
            <person name="Lucas S."/>
            <person name="Lapidus A."/>
            <person name="Glavina del Rio T."/>
            <person name="Dalin E."/>
            <person name="Tice H."/>
            <person name="Bruce D."/>
            <person name="Goodwin L."/>
            <person name="Pitluck S."/>
            <person name="Kiss H."/>
            <person name="Brettin T."/>
            <person name="Detter J.C."/>
            <person name="Han C."/>
            <person name="Kuske C.R."/>
            <person name="Schmutz J."/>
            <person name="Larimer F."/>
            <person name="Land M."/>
            <person name="Hauser L."/>
            <person name="Kyrpides N."/>
            <person name="Mikhailova N."/>
            <person name="Ingram L."/>
            <person name="Richardson P."/>
        </authorList>
    </citation>
    <scope>NUCLEOTIDE SEQUENCE [LARGE SCALE GENOMIC DNA]</scope>
    <source>
        <strain>ATCC 8739 / DSM 1576 / NBRC 3972 / NCIMB 8545 / WDCM 00012 / Crooks</strain>
    </source>
</reference>
<keyword id="KW-0066">ATP synthesis</keyword>
<keyword id="KW-0997">Cell inner membrane</keyword>
<keyword id="KW-1003">Cell membrane</keyword>
<keyword id="KW-0139">CF(1)</keyword>
<keyword id="KW-0375">Hydrogen ion transport</keyword>
<keyword id="KW-0406">Ion transport</keyword>
<keyword id="KW-0472">Membrane</keyword>
<keyword id="KW-0813">Transport</keyword>
<evidence type="ECO:0000255" key="1">
    <source>
        <dbReference type="HAMAP-Rule" id="MF_00530"/>
    </source>
</evidence>
<name>ATPE_ECOLC</name>
<dbReference type="EMBL" id="CP000946">
    <property type="protein sequence ID" value="ACA79859.1"/>
    <property type="molecule type" value="Genomic_DNA"/>
</dbReference>
<dbReference type="RefSeq" id="WP_001251965.1">
    <property type="nucleotide sequence ID" value="NZ_MTFT01000013.1"/>
</dbReference>
<dbReference type="SMR" id="B1IX07"/>
<dbReference type="KEGG" id="ecl:EcolC_4263"/>
<dbReference type="HOGENOM" id="CLU_084338_2_0_6"/>
<dbReference type="GO" id="GO:0005886">
    <property type="term" value="C:plasma membrane"/>
    <property type="evidence" value="ECO:0007669"/>
    <property type="project" value="UniProtKB-SubCell"/>
</dbReference>
<dbReference type="GO" id="GO:0045259">
    <property type="term" value="C:proton-transporting ATP synthase complex"/>
    <property type="evidence" value="ECO:0007669"/>
    <property type="project" value="UniProtKB-KW"/>
</dbReference>
<dbReference type="GO" id="GO:0005524">
    <property type="term" value="F:ATP binding"/>
    <property type="evidence" value="ECO:0007669"/>
    <property type="project" value="UniProtKB-UniRule"/>
</dbReference>
<dbReference type="GO" id="GO:0046933">
    <property type="term" value="F:proton-transporting ATP synthase activity, rotational mechanism"/>
    <property type="evidence" value="ECO:0007669"/>
    <property type="project" value="UniProtKB-UniRule"/>
</dbReference>
<dbReference type="CDD" id="cd12152">
    <property type="entry name" value="F1-ATPase_delta"/>
    <property type="match status" value="1"/>
</dbReference>
<dbReference type="FunFam" id="1.20.5.440:FF:000001">
    <property type="entry name" value="ATP synthase epsilon chain"/>
    <property type="match status" value="1"/>
</dbReference>
<dbReference type="FunFam" id="2.60.15.10:FF:000001">
    <property type="entry name" value="ATP synthase epsilon chain"/>
    <property type="match status" value="1"/>
</dbReference>
<dbReference type="Gene3D" id="1.20.5.440">
    <property type="entry name" value="ATP synthase delta/epsilon subunit, C-terminal domain"/>
    <property type="match status" value="1"/>
</dbReference>
<dbReference type="Gene3D" id="2.60.15.10">
    <property type="entry name" value="F0F1 ATP synthase delta/epsilon subunit, N-terminal"/>
    <property type="match status" value="1"/>
</dbReference>
<dbReference type="HAMAP" id="MF_00530">
    <property type="entry name" value="ATP_synth_epsil_bac"/>
    <property type="match status" value="1"/>
</dbReference>
<dbReference type="InterPro" id="IPR036794">
    <property type="entry name" value="ATP_F1_dsu/esu_C_sf"/>
</dbReference>
<dbReference type="InterPro" id="IPR001469">
    <property type="entry name" value="ATP_synth_F1_dsu/esu"/>
</dbReference>
<dbReference type="InterPro" id="IPR020546">
    <property type="entry name" value="ATP_synth_F1_dsu/esu_N"/>
</dbReference>
<dbReference type="InterPro" id="IPR020547">
    <property type="entry name" value="ATP_synth_F1_esu_C"/>
</dbReference>
<dbReference type="InterPro" id="IPR036771">
    <property type="entry name" value="ATPsynth_dsu/esu_N"/>
</dbReference>
<dbReference type="NCBIfam" id="TIGR01216">
    <property type="entry name" value="ATP_synt_epsi"/>
    <property type="match status" value="1"/>
</dbReference>
<dbReference type="NCBIfam" id="NF001847">
    <property type="entry name" value="PRK00571.1-4"/>
    <property type="match status" value="1"/>
</dbReference>
<dbReference type="PANTHER" id="PTHR13822">
    <property type="entry name" value="ATP SYNTHASE DELTA/EPSILON CHAIN"/>
    <property type="match status" value="1"/>
</dbReference>
<dbReference type="PANTHER" id="PTHR13822:SF10">
    <property type="entry name" value="ATP SYNTHASE EPSILON CHAIN, CHLOROPLASTIC"/>
    <property type="match status" value="1"/>
</dbReference>
<dbReference type="Pfam" id="PF00401">
    <property type="entry name" value="ATP-synt_DE"/>
    <property type="match status" value="1"/>
</dbReference>
<dbReference type="Pfam" id="PF02823">
    <property type="entry name" value="ATP-synt_DE_N"/>
    <property type="match status" value="1"/>
</dbReference>
<dbReference type="SUPFAM" id="SSF46604">
    <property type="entry name" value="Epsilon subunit of F1F0-ATP synthase C-terminal domain"/>
    <property type="match status" value="1"/>
</dbReference>
<dbReference type="SUPFAM" id="SSF51344">
    <property type="entry name" value="Epsilon subunit of F1F0-ATP synthase N-terminal domain"/>
    <property type="match status" value="1"/>
</dbReference>
<accession>B1IX07</accession>
<comment type="function">
    <text evidence="1">Produces ATP from ADP in the presence of a proton gradient across the membrane.</text>
</comment>
<comment type="subunit">
    <text evidence="1">F-type ATPases have 2 components, CF(1) - the catalytic core - and CF(0) - the membrane proton channel. CF(1) has five subunits: alpha(3), beta(3), gamma(1), delta(1), epsilon(1). CF(0) has three main subunits: a, b and c.</text>
</comment>
<comment type="subcellular location">
    <subcellularLocation>
        <location evidence="1">Cell inner membrane</location>
        <topology evidence="1">Peripheral membrane protein</topology>
    </subcellularLocation>
</comment>
<comment type="similarity">
    <text evidence="1">Belongs to the ATPase epsilon chain family.</text>
</comment>
<sequence length="139" mass="15068">MAMTYHLDVVSAEQQMFSGLVEKIQVTGSEGELGIYPGHAPLLTAIKPGMIRIVKQHGHEEFIYLSGGILEVQPGNVTVLADTAIRGQDLDEARAMEAKRKAEEHISSSHGDVDYAQASAELAKAIAQLRVIELTKKAM</sequence>
<proteinExistence type="inferred from homology"/>
<organism>
    <name type="scientific">Escherichia coli (strain ATCC 8739 / DSM 1576 / NBRC 3972 / NCIMB 8545 / WDCM 00012 / Crooks)</name>
    <dbReference type="NCBI Taxonomy" id="481805"/>
    <lineage>
        <taxon>Bacteria</taxon>
        <taxon>Pseudomonadati</taxon>
        <taxon>Pseudomonadota</taxon>
        <taxon>Gammaproteobacteria</taxon>
        <taxon>Enterobacterales</taxon>
        <taxon>Enterobacteriaceae</taxon>
        <taxon>Escherichia</taxon>
    </lineage>
</organism>
<gene>
    <name evidence="1" type="primary">atpC</name>
    <name type="ordered locus">EcolC_4263</name>
</gene>